<gene>
    <name evidence="1" type="primary">rlmN</name>
    <name type="ordered locus">XF_0459</name>
</gene>
<dbReference type="EC" id="2.1.1.192" evidence="1"/>
<dbReference type="EMBL" id="AE003849">
    <property type="protein sequence ID" value="AAF83269.1"/>
    <property type="molecule type" value="Genomic_DNA"/>
</dbReference>
<dbReference type="PIR" id="F82803">
    <property type="entry name" value="F82803"/>
</dbReference>
<dbReference type="SMR" id="Q9PG43"/>
<dbReference type="STRING" id="160492.XF_0459"/>
<dbReference type="KEGG" id="xfa:XF_0459"/>
<dbReference type="eggNOG" id="COG0820">
    <property type="taxonomic scope" value="Bacteria"/>
</dbReference>
<dbReference type="HOGENOM" id="CLU_029101_0_0_6"/>
<dbReference type="Proteomes" id="UP000000812">
    <property type="component" value="Chromosome"/>
</dbReference>
<dbReference type="GO" id="GO:0005737">
    <property type="term" value="C:cytoplasm"/>
    <property type="evidence" value="ECO:0007669"/>
    <property type="project" value="UniProtKB-SubCell"/>
</dbReference>
<dbReference type="GO" id="GO:0051539">
    <property type="term" value="F:4 iron, 4 sulfur cluster binding"/>
    <property type="evidence" value="ECO:0007669"/>
    <property type="project" value="UniProtKB-UniRule"/>
</dbReference>
<dbReference type="GO" id="GO:0046872">
    <property type="term" value="F:metal ion binding"/>
    <property type="evidence" value="ECO:0007669"/>
    <property type="project" value="UniProtKB-KW"/>
</dbReference>
<dbReference type="GO" id="GO:0070040">
    <property type="term" value="F:rRNA (adenine(2503)-C2-)-methyltransferase activity"/>
    <property type="evidence" value="ECO:0007669"/>
    <property type="project" value="UniProtKB-UniRule"/>
</dbReference>
<dbReference type="GO" id="GO:0019843">
    <property type="term" value="F:rRNA binding"/>
    <property type="evidence" value="ECO:0007669"/>
    <property type="project" value="UniProtKB-UniRule"/>
</dbReference>
<dbReference type="GO" id="GO:0002935">
    <property type="term" value="F:tRNA (adenine(37)-C2)-methyltransferase activity"/>
    <property type="evidence" value="ECO:0007669"/>
    <property type="project" value="UniProtKB-UniRule"/>
</dbReference>
<dbReference type="GO" id="GO:0000049">
    <property type="term" value="F:tRNA binding"/>
    <property type="evidence" value="ECO:0007669"/>
    <property type="project" value="UniProtKB-UniRule"/>
</dbReference>
<dbReference type="GO" id="GO:0070475">
    <property type="term" value="P:rRNA base methylation"/>
    <property type="evidence" value="ECO:0007669"/>
    <property type="project" value="UniProtKB-UniRule"/>
</dbReference>
<dbReference type="GO" id="GO:0030488">
    <property type="term" value="P:tRNA methylation"/>
    <property type="evidence" value="ECO:0007669"/>
    <property type="project" value="UniProtKB-UniRule"/>
</dbReference>
<dbReference type="CDD" id="cd01335">
    <property type="entry name" value="Radical_SAM"/>
    <property type="match status" value="1"/>
</dbReference>
<dbReference type="FunFam" id="1.10.150.530:FF:000003">
    <property type="entry name" value="Dual-specificity RNA methyltransferase RlmN"/>
    <property type="match status" value="1"/>
</dbReference>
<dbReference type="FunFam" id="3.20.20.70:FF:000008">
    <property type="entry name" value="Dual-specificity RNA methyltransferase RlmN"/>
    <property type="match status" value="1"/>
</dbReference>
<dbReference type="Gene3D" id="1.10.150.530">
    <property type="match status" value="1"/>
</dbReference>
<dbReference type="Gene3D" id="3.20.20.70">
    <property type="entry name" value="Aldolase class I"/>
    <property type="match status" value="1"/>
</dbReference>
<dbReference type="HAMAP" id="MF_01849">
    <property type="entry name" value="RNA_methyltr_RlmN"/>
    <property type="match status" value="1"/>
</dbReference>
<dbReference type="InterPro" id="IPR013785">
    <property type="entry name" value="Aldolase_TIM"/>
</dbReference>
<dbReference type="InterPro" id="IPR040072">
    <property type="entry name" value="Methyltransferase_A"/>
</dbReference>
<dbReference type="InterPro" id="IPR048641">
    <property type="entry name" value="RlmN_N"/>
</dbReference>
<dbReference type="InterPro" id="IPR027492">
    <property type="entry name" value="RNA_MTrfase_RlmN"/>
</dbReference>
<dbReference type="InterPro" id="IPR004383">
    <property type="entry name" value="rRNA_lsu_MTrfase_RlmN/Cfr"/>
</dbReference>
<dbReference type="InterPro" id="IPR007197">
    <property type="entry name" value="rSAM"/>
</dbReference>
<dbReference type="NCBIfam" id="TIGR00048">
    <property type="entry name" value="rRNA_mod_RlmN"/>
    <property type="match status" value="1"/>
</dbReference>
<dbReference type="PANTHER" id="PTHR30544">
    <property type="entry name" value="23S RRNA METHYLTRANSFERASE"/>
    <property type="match status" value="1"/>
</dbReference>
<dbReference type="PANTHER" id="PTHR30544:SF5">
    <property type="entry name" value="RADICAL SAM CORE DOMAIN-CONTAINING PROTEIN"/>
    <property type="match status" value="1"/>
</dbReference>
<dbReference type="Pfam" id="PF04055">
    <property type="entry name" value="Radical_SAM"/>
    <property type="match status" value="1"/>
</dbReference>
<dbReference type="Pfam" id="PF21016">
    <property type="entry name" value="RlmN_N"/>
    <property type="match status" value="1"/>
</dbReference>
<dbReference type="PIRSF" id="PIRSF006004">
    <property type="entry name" value="CHP00048"/>
    <property type="match status" value="1"/>
</dbReference>
<dbReference type="SFLD" id="SFLDF00275">
    <property type="entry name" value="adenosine_C2_methyltransferase"/>
    <property type="match status" value="1"/>
</dbReference>
<dbReference type="SFLD" id="SFLDG01062">
    <property type="entry name" value="methyltransferase_(Class_A)"/>
    <property type="match status" value="1"/>
</dbReference>
<dbReference type="SUPFAM" id="SSF102114">
    <property type="entry name" value="Radical SAM enzymes"/>
    <property type="match status" value="1"/>
</dbReference>
<dbReference type="PROSITE" id="PS51918">
    <property type="entry name" value="RADICAL_SAM"/>
    <property type="match status" value="1"/>
</dbReference>
<comment type="function">
    <text evidence="1">Specifically methylates position 2 of adenine 2503 in 23S rRNA and position 2 of adenine 37 in tRNAs. m2A2503 modification seems to play a crucial role in the proofreading step occurring at the peptidyl transferase center and thus would serve to optimize ribosomal fidelity.</text>
</comment>
<comment type="catalytic activity">
    <reaction evidence="1">
        <text>adenosine(2503) in 23S rRNA + 2 reduced [2Fe-2S]-[ferredoxin] + 2 S-adenosyl-L-methionine = 2-methyladenosine(2503) in 23S rRNA + 5'-deoxyadenosine + L-methionine + 2 oxidized [2Fe-2S]-[ferredoxin] + S-adenosyl-L-homocysteine</text>
        <dbReference type="Rhea" id="RHEA:42916"/>
        <dbReference type="Rhea" id="RHEA-COMP:10000"/>
        <dbReference type="Rhea" id="RHEA-COMP:10001"/>
        <dbReference type="Rhea" id="RHEA-COMP:10152"/>
        <dbReference type="Rhea" id="RHEA-COMP:10282"/>
        <dbReference type="ChEBI" id="CHEBI:17319"/>
        <dbReference type="ChEBI" id="CHEBI:33737"/>
        <dbReference type="ChEBI" id="CHEBI:33738"/>
        <dbReference type="ChEBI" id="CHEBI:57844"/>
        <dbReference type="ChEBI" id="CHEBI:57856"/>
        <dbReference type="ChEBI" id="CHEBI:59789"/>
        <dbReference type="ChEBI" id="CHEBI:74411"/>
        <dbReference type="ChEBI" id="CHEBI:74497"/>
        <dbReference type="EC" id="2.1.1.192"/>
    </reaction>
</comment>
<comment type="catalytic activity">
    <reaction evidence="1">
        <text>adenosine(37) in tRNA + 2 reduced [2Fe-2S]-[ferredoxin] + 2 S-adenosyl-L-methionine = 2-methyladenosine(37) in tRNA + 5'-deoxyadenosine + L-methionine + 2 oxidized [2Fe-2S]-[ferredoxin] + S-adenosyl-L-homocysteine</text>
        <dbReference type="Rhea" id="RHEA:43332"/>
        <dbReference type="Rhea" id="RHEA-COMP:10000"/>
        <dbReference type="Rhea" id="RHEA-COMP:10001"/>
        <dbReference type="Rhea" id="RHEA-COMP:10162"/>
        <dbReference type="Rhea" id="RHEA-COMP:10485"/>
        <dbReference type="ChEBI" id="CHEBI:17319"/>
        <dbReference type="ChEBI" id="CHEBI:33737"/>
        <dbReference type="ChEBI" id="CHEBI:33738"/>
        <dbReference type="ChEBI" id="CHEBI:57844"/>
        <dbReference type="ChEBI" id="CHEBI:57856"/>
        <dbReference type="ChEBI" id="CHEBI:59789"/>
        <dbReference type="ChEBI" id="CHEBI:74411"/>
        <dbReference type="ChEBI" id="CHEBI:74497"/>
        <dbReference type="EC" id="2.1.1.192"/>
    </reaction>
</comment>
<comment type="cofactor">
    <cofactor evidence="1">
        <name>[4Fe-4S] cluster</name>
        <dbReference type="ChEBI" id="CHEBI:49883"/>
    </cofactor>
    <text evidence="1">Binds 1 [4Fe-4S] cluster. The cluster is coordinated with 3 cysteines and an exchangeable S-adenosyl-L-methionine.</text>
</comment>
<comment type="subcellular location">
    <subcellularLocation>
        <location evidence="1">Cytoplasm</location>
    </subcellularLocation>
</comment>
<comment type="miscellaneous">
    <text evidence="1">Reaction proceeds by a ping-pong mechanism involving intermediate methylation of a conserved cysteine residue.</text>
</comment>
<comment type="similarity">
    <text evidence="1">Belongs to the radical SAM superfamily. RlmN family.</text>
</comment>
<keyword id="KW-0004">4Fe-4S</keyword>
<keyword id="KW-0963">Cytoplasm</keyword>
<keyword id="KW-1015">Disulfide bond</keyword>
<keyword id="KW-0408">Iron</keyword>
<keyword id="KW-0411">Iron-sulfur</keyword>
<keyword id="KW-0479">Metal-binding</keyword>
<keyword id="KW-0489">Methyltransferase</keyword>
<keyword id="KW-0698">rRNA processing</keyword>
<keyword id="KW-0949">S-adenosyl-L-methionine</keyword>
<keyword id="KW-0808">Transferase</keyword>
<keyword id="KW-0819">tRNA processing</keyword>
<sequence length="406" mass="45655">MNGFAVIPSVTTTTTSGEPIAGDVARKQNLLELNREGLERFFENVLGEKRYRAHQVMKWIHHRYVSDFEQMTDVGKALRARLQACAEVRVPCVVFDKHSADGTHKWLLAMDTDSKNAIETVYIPDKGRGTLCVSSQIGCGLNCTFCSTATQGFNRNLTTAEIIGQVWVAARHLGNVPHQQRRLTNVVMMGMGEPLMNFDNVVRAMSVMRDDLGYGLSNKRVTLSTSGLVPMIDRLSTESDVSLAVSLHAPNDKLREQLVPLNKKYPIAELMASCERYLSVNRKRDSVTFEYTLMKGVNDKQEHAHELVKLMRQFDCAMQVKGAAKVNLIPFNPFPGTYYERSTEVDIRAFQKILLDAQILAMVRRTRGDDIDAACGQLKGQVVDRTRRQAEFRRTIEDRVGRDVAA</sequence>
<accession>Q9PG43</accession>
<feature type="chain" id="PRO_0000350533" description="Dual-specificity RNA methyltransferase RlmN">
    <location>
        <begin position="1"/>
        <end position="406"/>
    </location>
</feature>
<feature type="domain" description="Radical SAM core" evidence="2">
    <location>
        <begin position="125"/>
        <end position="370"/>
    </location>
</feature>
<feature type="active site" description="Proton acceptor" evidence="1">
    <location>
        <position position="119"/>
    </location>
</feature>
<feature type="active site" description="S-methylcysteine intermediate" evidence="1">
    <location>
        <position position="375"/>
    </location>
</feature>
<feature type="binding site" evidence="1">
    <location>
        <position position="139"/>
    </location>
    <ligand>
        <name>[4Fe-4S] cluster</name>
        <dbReference type="ChEBI" id="CHEBI:49883"/>
        <note>4Fe-4S-S-AdoMet</note>
    </ligand>
</feature>
<feature type="binding site" evidence="1">
    <location>
        <position position="143"/>
    </location>
    <ligand>
        <name>[4Fe-4S] cluster</name>
        <dbReference type="ChEBI" id="CHEBI:49883"/>
        <note>4Fe-4S-S-AdoMet</note>
    </ligand>
</feature>
<feature type="binding site" evidence="1">
    <location>
        <position position="146"/>
    </location>
    <ligand>
        <name>[4Fe-4S] cluster</name>
        <dbReference type="ChEBI" id="CHEBI:49883"/>
        <note>4Fe-4S-S-AdoMet</note>
    </ligand>
</feature>
<feature type="binding site" evidence="1">
    <location>
        <begin position="192"/>
        <end position="193"/>
    </location>
    <ligand>
        <name>S-adenosyl-L-methionine</name>
        <dbReference type="ChEBI" id="CHEBI:59789"/>
    </ligand>
</feature>
<feature type="binding site" evidence="1">
    <location>
        <position position="224"/>
    </location>
    <ligand>
        <name>S-adenosyl-L-methionine</name>
        <dbReference type="ChEBI" id="CHEBI:59789"/>
    </ligand>
</feature>
<feature type="binding site" evidence="1">
    <location>
        <begin position="246"/>
        <end position="248"/>
    </location>
    <ligand>
        <name>S-adenosyl-L-methionine</name>
        <dbReference type="ChEBI" id="CHEBI:59789"/>
    </ligand>
</feature>
<feature type="binding site" evidence="1">
    <location>
        <position position="332"/>
    </location>
    <ligand>
        <name>S-adenosyl-L-methionine</name>
        <dbReference type="ChEBI" id="CHEBI:59789"/>
    </ligand>
</feature>
<feature type="disulfide bond" description="(transient)" evidence="1">
    <location>
        <begin position="132"/>
        <end position="375"/>
    </location>
</feature>
<evidence type="ECO:0000255" key="1">
    <source>
        <dbReference type="HAMAP-Rule" id="MF_01849"/>
    </source>
</evidence>
<evidence type="ECO:0000255" key="2">
    <source>
        <dbReference type="PROSITE-ProRule" id="PRU01266"/>
    </source>
</evidence>
<reference key="1">
    <citation type="journal article" date="2000" name="Nature">
        <title>The genome sequence of the plant pathogen Xylella fastidiosa.</title>
        <authorList>
            <person name="Simpson A.J.G."/>
            <person name="Reinach F.C."/>
            <person name="Arruda P."/>
            <person name="Abreu F.A."/>
            <person name="Acencio M."/>
            <person name="Alvarenga R."/>
            <person name="Alves L.M.C."/>
            <person name="Araya J.E."/>
            <person name="Baia G.S."/>
            <person name="Baptista C.S."/>
            <person name="Barros M.H."/>
            <person name="Bonaccorsi E.D."/>
            <person name="Bordin S."/>
            <person name="Bove J.M."/>
            <person name="Briones M.R.S."/>
            <person name="Bueno M.R.P."/>
            <person name="Camargo A.A."/>
            <person name="Camargo L.E.A."/>
            <person name="Carraro D.M."/>
            <person name="Carrer H."/>
            <person name="Colauto N.B."/>
            <person name="Colombo C."/>
            <person name="Costa F.F."/>
            <person name="Costa M.C.R."/>
            <person name="Costa-Neto C.M."/>
            <person name="Coutinho L.L."/>
            <person name="Cristofani M."/>
            <person name="Dias-Neto E."/>
            <person name="Docena C."/>
            <person name="El-Dorry H."/>
            <person name="Facincani A.P."/>
            <person name="Ferreira A.J.S."/>
            <person name="Ferreira V.C.A."/>
            <person name="Ferro J.A."/>
            <person name="Fraga J.S."/>
            <person name="Franca S.C."/>
            <person name="Franco M.C."/>
            <person name="Frohme M."/>
            <person name="Furlan L.R."/>
            <person name="Garnier M."/>
            <person name="Goldman G.H."/>
            <person name="Goldman M.H.S."/>
            <person name="Gomes S.L."/>
            <person name="Gruber A."/>
            <person name="Ho P.L."/>
            <person name="Hoheisel J.D."/>
            <person name="Junqueira M.L."/>
            <person name="Kemper E.L."/>
            <person name="Kitajima J.P."/>
            <person name="Krieger J.E."/>
            <person name="Kuramae E.E."/>
            <person name="Laigret F."/>
            <person name="Lambais M.R."/>
            <person name="Leite L.C.C."/>
            <person name="Lemos E.G.M."/>
            <person name="Lemos M.V.F."/>
            <person name="Lopes S.A."/>
            <person name="Lopes C.R."/>
            <person name="Machado J.A."/>
            <person name="Machado M.A."/>
            <person name="Madeira A.M.B.N."/>
            <person name="Madeira H.M.F."/>
            <person name="Marino C.L."/>
            <person name="Marques M.V."/>
            <person name="Martins E.A.L."/>
            <person name="Martins E.M.F."/>
            <person name="Matsukuma A.Y."/>
            <person name="Menck C.F.M."/>
            <person name="Miracca E.C."/>
            <person name="Miyaki C.Y."/>
            <person name="Monteiro-Vitorello C.B."/>
            <person name="Moon D.H."/>
            <person name="Nagai M.A."/>
            <person name="Nascimento A.L.T.O."/>
            <person name="Netto L.E.S."/>
            <person name="Nhani A. Jr."/>
            <person name="Nobrega F.G."/>
            <person name="Nunes L.R."/>
            <person name="Oliveira M.A."/>
            <person name="de Oliveira M.C."/>
            <person name="de Oliveira R.C."/>
            <person name="Palmieri D.A."/>
            <person name="Paris A."/>
            <person name="Peixoto B.R."/>
            <person name="Pereira G.A.G."/>
            <person name="Pereira H.A. Jr."/>
            <person name="Pesquero J.B."/>
            <person name="Quaggio R.B."/>
            <person name="Roberto P.G."/>
            <person name="Rodrigues V."/>
            <person name="de Rosa A.J.M."/>
            <person name="de Rosa V.E. Jr."/>
            <person name="de Sa R.G."/>
            <person name="Santelli R.V."/>
            <person name="Sawasaki H.E."/>
            <person name="da Silva A.C.R."/>
            <person name="da Silva A.M."/>
            <person name="da Silva F.R."/>
            <person name="Silva W.A. Jr."/>
            <person name="da Silveira J.F."/>
            <person name="Silvestri M.L.Z."/>
            <person name="Siqueira W.J."/>
            <person name="de Souza A.A."/>
            <person name="de Souza A.P."/>
            <person name="Terenzi M.F."/>
            <person name="Truffi D."/>
            <person name="Tsai S.M."/>
            <person name="Tsuhako M.H."/>
            <person name="Vallada H."/>
            <person name="Van Sluys M.A."/>
            <person name="Verjovski-Almeida S."/>
            <person name="Vettore A.L."/>
            <person name="Zago M.A."/>
            <person name="Zatz M."/>
            <person name="Meidanis J."/>
            <person name="Setubal J.C."/>
        </authorList>
    </citation>
    <scope>NUCLEOTIDE SEQUENCE [LARGE SCALE GENOMIC DNA]</scope>
    <source>
        <strain>9a5c</strain>
    </source>
</reference>
<proteinExistence type="inferred from homology"/>
<protein>
    <recommendedName>
        <fullName evidence="1">Dual-specificity RNA methyltransferase RlmN</fullName>
        <ecNumber evidence="1">2.1.1.192</ecNumber>
    </recommendedName>
    <alternativeName>
        <fullName evidence="1">23S rRNA (adenine(2503)-C(2))-methyltransferase</fullName>
    </alternativeName>
    <alternativeName>
        <fullName evidence="1">23S rRNA m2A2503 methyltransferase</fullName>
    </alternativeName>
    <alternativeName>
        <fullName evidence="1">Ribosomal RNA large subunit methyltransferase N</fullName>
    </alternativeName>
    <alternativeName>
        <fullName evidence="1">tRNA (adenine(37)-C(2))-methyltransferase</fullName>
    </alternativeName>
    <alternativeName>
        <fullName evidence="1">tRNA m2A37 methyltransferase</fullName>
    </alternativeName>
</protein>
<organism>
    <name type="scientific">Xylella fastidiosa (strain 9a5c)</name>
    <dbReference type="NCBI Taxonomy" id="160492"/>
    <lineage>
        <taxon>Bacteria</taxon>
        <taxon>Pseudomonadati</taxon>
        <taxon>Pseudomonadota</taxon>
        <taxon>Gammaproteobacteria</taxon>
        <taxon>Lysobacterales</taxon>
        <taxon>Lysobacteraceae</taxon>
        <taxon>Xylella</taxon>
    </lineage>
</organism>
<name>RLMN_XYLFA</name>